<dbReference type="EMBL" id="FM180568">
    <property type="protein sequence ID" value="CAS09492.1"/>
    <property type="molecule type" value="Genomic_DNA"/>
</dbReference>
<dbReference type="RefSeq" id="WP_000156292.1">
    <property type="nucleotide sequence ID" value="NC_011601.1"/>
</dbReference>
<dbReference type="SMR" id="B7USJ6"/>
<dbReference type="KEGG" id="ecg:E2348C_1944"/>
<dbReference type="HOGENOM" id="CLU_133645_0_0_6"/>
<dbReference type="Proteomes" id="UP000008205">
    <property type="component" value="Chromosome"/>
</dbReference>
<dbReference type="GO" id="GO:0005886">
    <property type="term" value="C:plasma membrane"/>
    <property type="evidence" value="ECO:0007669"/>
    <property type="project" value="UniProtKB-SubCell"/>
</dbReference>
<dbReference type="HAMAP" id="MF_01071">
    <property type="entry name" value="UPF0266"/>
    <property type="match status" value="1"/>
</dbReference>
<dbReference type="InterPro" id="IPR009328">
    <property type="entry name" value="DUF986"/>
</dbReference>
<dbReference type="NCBIfam" id="NF002791">
    <property type="entry name" value="PRK02913.1"/>
    <property type="match status" value="1"/>
</dbReference>
<dbReference type="Pfam" id="PF06173">
    <property type="entry name" value="DUF986"/>
    <property type="match status" value="1"/>
</dbReference>
<dbReference type="PIRSF" id="PIRSF020687">
    <property type="entry name" value="UCP020687"/>
    <property type="match status" value="1"/>
</dbReference>
<organism>
    <name type="scientific">Escherichia coli O127:H6 (strain E2348/69 / EPEC)</name>
    <dbReference type="NCBI Taxonomy" id="574521"/>
    <lineage>
        <taxon>Bacteria</taxon>
        <taxon>Pseudomonadati</taxon>
        <taxon>Pseudomonadota</taxon>
        <taxon>Gammaproteobacteria</taxon>
        <taxon>Enterobacterales</taxon>
        <taxon>Enterobacteriaceae</taxon>
        <taxon>Escherichia</taxon>
    </lineage>
</organism>
<keyword id="KW-0997">Cell inner membrane</keyword>
<keyword id="KW-1003">Cell membrane</keyword>
<keyword id="KW-0472">Membrane</keyword>
<keyword id="KW-1185">Reference proteome</keyword>
<keyword id="KW-0812">Transmembrane</keyword>
<keyword id="KW-1133">Transmembrane helix</keyword>
<accession>B7USJ6</accession>
<feature type="chain" id="PRO_1000149753" description="UPF0266 membrane protein YobD">
    <location>
        <begin position="1"/>
        <end position="152"/>
    </location>
</feature>
<feature type="transmembrane region" description="Helical" evidence="1">
    <location>
        <begin position="6"/>
        <end position="26"/>
    </location>
</feature>
<feature type="transmembrane region" description="Helical" evidence="1">
    <location>
        <begin position="45"/>
        <end position="65"/>
    </location>
</feature>
<feature type="transmembrane region" description="Helical" evidence="1">
    <location>
        <begin position="67"/>
        <end position="87"/>
    </location>
</feature>
<sequence length="152" mass="17602">MTITDLVLILFIAVLLAFAIYDQFIMPRRNGPTLLAIPLLRRGRIDSVIFVGLIVILIYNSVTNHGALITTWLLSALALMGFYIFWIRVPKIIFKQKGFFFANVWIEYSRIKAMNLSEDGVLVMQLEQRRLLIRVRNIDDLEKVYKLLVSTQ</sequence>
<reference key="1">
    <citation type="journal article" date="2009" name="J. Bacteriol.">
        <title>Complete genome sequence and comparative genome analysis of enteropathogenic Escherichia coli O127:H6 strain E2348/69.</title>
        <authorList>
            <person name="Iguchi A."/>
            <person name="Thomson N.R."/>
            <person name="Ogura Y."/>
            <person name="Saunders D."/>
            <person name="Ooka T."/>
            <person name="Henderson I.R."/>
            <person name="Harris D."/>
            <person name="Asadulghani M."/>
            <person name="Kurokawa K."/>
            <person name="Dean P."/>
            <person name="Kenny B."/>
            <person name="Quail M.A."/>
            <person name="Thurston S."/>
            <person name="Dougan G."/>
            <person name="Hayashi T."/>
            <person name="Parkhill J."/>
            <person name="Frankel G."/>
        </authorList>
    </citation>
    <scope>NUCLEOTIDE SEQUENCE [LARGE SCALE GENOMIC DNA]</scope>
    <source>
        <strain>E2348/69 / EPEC</strain>
    </source>
</reference>
<evidence type="ECO:0000255" key="1">
    <source>
        <dbReference type="HAMAP-Rule" id="MF_01071"/>
    </source>
</evidence>
<gene>
    <name evidence="1" type="primary">yobD</name>
    <name type="ordered locus">E2348C_1944</name>
</gene>
<name>YOBD_ECO27</name>
<comment type="subcellular location">
    <subcellularLocation>
        <location evidence="1">Cell inner membrane</location>
        <topology evidence="1">Multi-pass membrane protein</topology>
    </subcellularLocation>
</comment>
<comment type="similarity">
    <text evidence="1">Belongs to the UPF0266 family.</text>
</comment>
<proteinExistence type="inferred from homology"/>
<protein>
    <recommendedName>
        <fullName evidence="1">UPF0266 membrane protein YobD</fullName>
    </recommendedName>
</protein>